<dbReference type="EMBL" id="X17403">
    <property type="protein sequence ID" value="CAA35289.1"/>
    <property type="status" value="ALT_INIT"/>
    <property type="molecule type" value="Genomic_DNA"/>
</dbReference>
<dbReference type="EMBL" id="X04650">
    <property type="protein sequence ID" value="CAB37114.1"/>
    <property type="status" value="ALT_INIT"/>
    <property type="molecule type" value="Genomic_DNA"/>
</dbReference>
<dbReference type="EMBL" id="BK000394">
    <property type="protein sequence ID" value="DAA00238.1"/>
    <property type="molecule type" value="Genomic_DNA"/>
</dbReference>
<dbReference type="PIR" id="F27231">
    <property type="entry name" value="QQBEG6"/>
</dbReference>
<dbReference type="Proteomes" id="UP000008991">
    <property type="component" value="Segment"/>
</dbReference>
<dbReference type="Proteomes" id="UP000008992">
    <property type="component" value="Segment"/>
</dbReference>
<dbReference type="GO" id="GO:0019033">
    <property type="term" value="C:viral tegument"/>
    <property type="evidence" value="ECO:0007669"/>
    <property type="project" value="UniProtKB-SubCell"/>
</dbReference>
<dbReference type="InterPro" id="IPR003360">
    <property type="entry name" value="US22-like"/>
</dbReference>
<dbReference type="Pfam" id="PF02393">
    <property type="entry name" value="US22"/>
    <property type="match status" value="2"/>
</dbReference>
<accession>P09722</accession>
<accession>Q7M6F5</accession>
<reference key="1">
    <citation type="journal article" date="1986" name="J. Mol. Biol.">
        <title>Sequence of the short unique region, short repeats, and part of the long repeats of human cytomegalovirus.</title>
        <authorList>
            <person name="Weston K.M."/>
            <person name="Barrell B.G."/>
        </authorList>
    </citation>
    <scope>NUCLEOTIDE SEQUENCE [GENOMIC DNA]</scope>
</reference>
<reference key="2">
    <citation type="journal article" date="1990" name="Curr. Top. Microbiol. Immunol.">
        <title>Analysis of the protein-coding content of the sequence of human cytomegalovirus strain AD169.</title>
        <authorList>
            <person name="Chee M.S."/>
            <person name="Bankier A.T."/>
            <person name="Beck S."/>
            <person name="Bohni R."/>
            <person name="Brown C.M."/>
            <person name="Cerny R."/>
            <person name="Horsnell T."/>
            <person name="Hutchison C.A. III"/>
            <person name="Kouzarides T."/>
            <person name="Martignetti J.A."/>
            <person name="Preddie E."/>
            <person name="Satchwell S.C."/>
            <person name="Tomlinson P."/>
            <person name="Weston K.M."/>
            <person name="Barrell B.G."/>
        </authorList>
    </citation>
    <scope>NUCLEOTIDE SEQUENCE [LARGE SCALE GENOMIC DNA]</scope>
</reference>
<reference key="3">
    <citation type="journal article" date="2002" name="J. Gen. Virol.">
        <title>The products of human cytomegalovirus genes UL23, UL24, UL43 and US22 are tegument components.</title>
        <authorList>
            <person name="Adair R."/>
            <person name="Douglas E.R."/>
            <person name="Maclean J.B."/>
            <person name="Graham S.Y."/>
            <person name="Aitken J.D."/>
            <person name="Jamieson F.E."/>
            <person name="Dargan D.J."/>
        </authorList>
    </citation>
    <scope>SUBCELLULAR LOCATION</scope>
</reference>
<reference key="4">
    <citation type="journal article" date="2003" name="J. Gen. Virol.">
        <title>The human cytomegalovirus genome revisited: comparison with the chimpanzee cytomegalovirus genome.</title>
        <authorList>
            <person name="Davison A.J."/>
            <person name="Dolan A."/>
            <person name="Akter P."/>
            <person name="Addison C."/>
            <person name="Dargan D.J."/>
            <person name="Alcendor D.J."/>
            <person name="McGeoch D.J."/>
            <person name="Hayward G.S."/>
        </authorList>
    </citation>
    <scope>GENOME REANNOTATION</scope>
    <scope>SEQUENCE REVISION TO N-TERMINUS</scope>
</reference>
<reference key="5">
    <citation type="journal article" date="2003" name="J. Gen. Virol.">
        <authorList>
            <person name="Davison A.J."/>
            <person name="Dolan A."/>
            <person name="Akter P."/>
            <person name="Addison C."/>
            <person name="Dargan D.J."/>
            <person name="Alcendor D.J."/>
            <person name="McGeoch D.J."/>
            <person name="Hayward G.S."/>
        </authorList>
    </citation>
    <scope>ERRATUM OF PUBMED:12533697</scope>
</reference>
<reference key="6">
    <citation type="journal article" date="2004" name="J. Virol.">
        <title>Identification of proteins in human cytomegalovirus (HCMV) particles: the HCMV proteome.</title>
        <authorList>
            <person name="Varnum S.M."/>
            <person name="Streblow D.N."/>
            <person name="Monroe M.E."/>
            <person name="Smith P."/>
            <person name="Auberry K.J."/>
            <person name="Pasa-Tolic L."/>
            <person name="Wang D."/>
            <person name="Camp D.G. II"/>
            <person name="Rodland K."/>
            <person name="Wiley S."/>
            <person name="Britt W."/>
            <person name="Shenk T."/>
            <person name="Smith R.D."/>
            <person name="Nelson J.A."/>
        </authorList>
    </citation>
    <scope>IDENTIFICATION</scope>
</reference>
<reference key="7">
    <citation type="journal article" date="2004" name="J. Virol.">
        <authorList>
            <person name="Varnum S.M."/>
            <person name="Streblow D.N."/>
            <person name="Monroe M.E."/>
            <person name="Smith P."/>
            <person name="Auberry K.J."/>
            <person name="Pasa-Tolic L."/>
            <person name="Wang D."/>
            <person name="Camp D.G. II"/>
            <person name="Rodland K."/>
            <person name="Wiley S."/>
            <person name="Britt W."/>
            <person name="Shenk T."/>
            <person name="Smith R.D."/>
            <person name="Nelson J.A."/>
        </authorList>
    </citation>
    <scope>ERRATUM OF PUBMED:15452216</scope>
</reference>
<name>US22_HCMVA</name>
<feature type="chain" id="PRO_0000115284" description="Early nuclear protein HWLF1">
    <location>
        <begin position="1"/>
        <end position="576"/>
    </location>
</feature>
<feature type="region of interest" description="Disordered" evidence="1">
    <location>
        <begin position="471"/>
        <end position="576"/>
    </location>
</feature>
<feature type="compositionally biased region" description="Basic residues" evidence="1">
    <location>
        <begin position="542"/>
        <end position="555"/>
    </location>
</feature>
<feature type="compositionally biased region" description="Acidic residues" evidence="1">
    <location>
        <begin position="566"/>
        <end position="576"/>
    </location>
</feature>
<keyword id="KW-1185">Reference proteome</keyword>
<keyword id="KW-0946">Virion</keyword>
<keyword id="KW-0920">Virion tegument</keyword>
<sequence>MSLLTKAAAEAWGTYLRQRDERCEDAIRCDYGVFQFRNTVFQKTLSMLQGLYLRQYDPPALRTYVQRHQGTTVALRNPANWFLVMREQAAIPQIYARSLAADYLCCDDTLEAVGVLAVRPPDSDLTRNTKQAQELPCVLMLSHYGTVYVYDWETDGLYEVASDIKAFSKNGLLWCEYVYRHPQTPFATTEPRYHVQKFLCTDPTDAAAVAKTAREMSGLNLVIRTPGRTEVEPLLMLGSIEGLRACRPFDHMPAADFRDLLNFIRQRLCCEWYVVGLVGYYLAYGPFVPSGLVLLDKFGVVYLHKIEDSDLYRIADNFHMFLKCGLLKLRGLCRFDRGLRGECRLEELPVCHHTLKRDVLRWHGALGTITRSQLESALDWFLRPTRGTDKVPNNSSAWGRTDLLPTGALQDNQNWAFPSHSVETLPALQGGLWEDNDETTQTVDGQRCFRMPKFFPPPMCRVPYNECGVELPGGDSSDEDESGRPRRIANRIGDTPETPCNSENEDDTTVEGTSGGPEAMDSQAPYPSEDSPTTEKEAWLQRGRRAKAMHARGHTLKQVPIPEPDQMGDDGPDPGP</sequence>
<proteinExistence type="inferred from homology"/>
<gene>
    <name type="primary">US22</name>
</gene>
<organism>
    <name type="scientific">Human cytomegalovirus (strain AD169)</name>
    <name type="common">HHV-5</name>
    <name type="synonym">Human herpesvirus 5</name>
    <dbReference type="NCBI Taxonomy" id="10360"/>
    <lineage>
        <taxon>Viruses</taxon>
        <taxon>Duplodnaviria</taxon>
        <taxon>Heunggongvirae</taxon>
        <taxon>Peploviricota</taxon>
        <taxon>Herviviricetes</taxon>
        <taxon>Herpesvirales</taxon>
        <taxon>Orthoherpesviridae</taxon>
        <taxon>Betaherpesvirinae</taxon>
        <taxon>Cytomegalovirus</taxon>
        <taxon>Cytomegalovirus humanbeta5</taxon>
        <taxon>Human cytomegalovirus</taxon>
    </lineage>
</organism>
<protein>
    <recommendedName>
        <fullName>Early nuclear protein HWLF1</fullName>
    </recommendedName>
    <alternativeName>
        <fullName>Tegument protein US22</fullName>
    </alternativeName>
</protein>
<evidence type="ECO:0000256" key="1">
    <source>
        <dbReference type="SAM" id="MobiDB-lite"/>
    </source>
</evidence>
<evidence type="ECO:0000269" key="2">
    <source>
    </source>
</evidence>
<evidence type="ECO:0000305" key="3"/>
<organismHost>
    <name type="scientific">Homo sapiens</name>
    <name type="common">Human</name>
    <dbReference type="NCBI Taxonomy" id="9606"/>
</organismHost>
<comment type="subcellular location">
    <subcellularLocation>
        <location evidence="2">Virion tegument</location>
    </subcellularLocation>
</comment>
<comment type="similarity">
    <text evidence="3">Belongs to the herpesviridae US22 family.</text>
</comment>
<comment type="sequence caution" evidence="3">
    <conflict type="erroneous initiation">
        <sequence resource="EMBL-CDS" id="CAA35289"/>
    </conflict>
</comment>
<comment type="sequence caution" evidence="3">
    <conflict type="erroneous initiation">
        <sequence resource="EMBL-CDS" id="CAB37114"/>
    </conflict>
</comment>